<accession>P05762</accession>
<accession>Q5V299</accession>
<organism>
    <name type="scientific">Haloarcula marismortui (strain ATCC 43049 / DSM 3752 / JCM 8966 / VKM B-1809)</name>
    <name type="common">Halobacterium marismortui</name>
    <dbReference type="NCBI Taxonomy" id="272569"/>
    <lineage>
        <taxon>Archaea</taxon>
        <taxon>Methanobacteriati</taxon>
        <taxon>Methanobacteriota</taxon>
        <taxon>Stenosarchaea group</taxon>
        <taxon>Halobacteria</taxon>
        <taxon>Halobacteriales</taxon>
        <taxon>Haloarculaceae</taxon>
        <taxon>Haloarcula</taxon>
    </lineage>
</organism>
<proteinExistence type="evidence at protein level"/>
<dbReference type="EMBL" id="J04062">
    <property type="protein sequence ID" value="AAA72208.1"/>
    <property type="molecule type" value="Genomic_DNA"/>
</dbReference>
<dbReference type="EMBL" id="AY596297">
    <property type="protein sequence ID" value="AAV46353.1"/>
    <property type="molecule type" value="Genomic_DNA"/>
</dbReference>
<dbReference type="PIR" id="A31906">
    <property type="entry name" value="R3HS11"/>
</dbReference>
<dbReference type="RefSeq" id="WP_011223615.1">
    <property type="nucleotide sequence ID" value="NC_006396.1"/>
</dbReference>
<dbReference type="SMR" id="P05762"/>
<dbReference type="STRING" id="272569.rrnAC1426"/>
<dbReference type="PaxDb" id="272569-rrnAC1426"/>
<dbReference type="EnsemblBacteria" id="AAV46353">
    <property type="protein sequence ID" value="AAV46353"/>
    <property type="gene ID" value="rrnAC1426"/>
</dbReference>
<dbReference type="GeneID" id="40152395"/>
<dbReference type="KEGG" id="hma:rrnAC1426"/>
<dbReference type="PATRIC" id="fig|272569.17.peg.2122"/>
<dbReference type="eggNOG" id="arCOG04185">
    <property type="taxonomic scope" value="Archaea"/>
</dbReference>
<dbReference type="HOGENOM" id="CLU_090139_2_0_2"/>
<dbReference type="Proteomes" id="UP000001169">
    <property type="component" value="Chromosome I"/>
</dbReference>
<dbReference type="GO" id="GO:0022627">
    <property type="term" value="C:cytosolic small ribosomal subunit"/>
    <property type="evidence" value="ECO:0007669"/>
    <property type="project" value="TreeGrafter"/>
</dbReference>
<dbReference type="GO" id="GO:0070181">
    <property type="term" value="F:small ribosomal subunit rRNA binding"/>
    <property type="evidence" value="ECO:0007669"/>
    <property type="project" value="TreeGrafter"/>
</dbReference>
<dbReference type="GO" id="GO:0003735">
    <property type="term" value="F:structural constituent of ribosome"/>
    <property type="evidence" value="ECO:0007669"/>
    <property type="project" value="InterPro"/>
</dbReference>
<dbReference type="GO" id="GO:0006412">
    <property type="term" value="P:translation"/>
    <property type="evidence" value="ECO:0007669"/>
    <property type="project" value="UniProtKB-UniRule"/>
</dbReference>
<dbReference type="CDD" id="cd00677">
    <property type="entry name" value="S15_NS1_EPRS_RNA-bind"/>
    <property type="match status" value="1"/>
</dbReference>
<dbReference type="Gene3D" id="4.10.860.130">
    <property type="match status" value="1"/>
</dbReference>
<dbReference type="Gene3D" id="1.10.287.10">
    <property type="entry name" value="S15/NS1, RNA-binding"/>
    <property type="match status" value="1"/>
</dbReference>
<dbReference type="HAMAP" id="MF_01343_A">
    <property type="entry name" value="Ribosomal_uS15_A"/>
    <property type="match status" value="1"/>
</dbReference>
<dbReference type="InterPro" id="IPR000589">
    <property type="entry name" value="Ribosomal_uS15"/>
</dbReference>
<dbReference type="InterPro" id="IPR023029">
    <property type="entry name" value="Ribosomal_uS15_arc_euk"/>
</dbReference>
<dbReference type="InterPro" id="IPR012606">
    <property type="entry name" value="Ribosomal_uS15_N"/>
</dbReference>
<dbReference type="InterPro" id="IPR009068">
    <property type="entry name" value="uS15_NS1_RNA-bd_sf"/>
</dbReference>
<dbReference type="NCBIfam" id="NF006331">
    <property type="entry name" value="PRK08561.1"/>
    <property type="match status" value="1"/>
</dbReference>
<dbReference type="PANTHER" id="PTHR11885">
    <property type="entry name" value="RIBOSOMAL PROTEIN S15P/S13E"/>
    <property type="match status" value="1"/>
</dbReference>
<dbReference type="PANTHER" id="PTHR11885:SF6">
    <property type="entry name" value="SMALL RIBOSOMAL SUBUNIT PROTEIN US15"/>
    <property type="match status" value="1"/>
</dbReference>
<dbReference type="Pfam" id="PF08069">
    <property type="entry name" value="Ribosomal_S13_N"/>
    <property type="match status" value="1"/>
</dbReference>
<dbReference type="Pfam" id="PF00312">
    <property type="entry name" value="Ribosomal_S15"/>
    <property type="match status" value="1"/>
</dbReference>
<dbReference type="SMART" id="SM01386">
    <property type="entry name" value="Ribosomal_S13_N"/>
    <property type="match status" value="1"/>
</dbReference>
<dbReference type="SMART" id="SM01387">
    <property type="entry name" value="Ribosomal_S15"/>
    <property type="match status" value="1"/>
</dbReference>
<dbReference type="SUPFAM" id="SSF47060">
    <property type="entry name" value="S15/NS1 RNA-binding domain"/>
    <property type="match status" value="1"/>
</dbReference>
<dbReference type="PROSITE" id="PS00362">
    <property type="entry name" value="RIBOSOMAL_S15"/>
    <property type="match status" value="1"/>
</dbReference>
<keyword id="KW-0903">Direct protein sequencing</keyword>
<keyword id="KW-1185">Reference proteome</keyword>
<keyword id="KW-0687">Ribonucleoprotein</keyword>
<keyword id="KW-0689">Ribosomal protein</keyword>
<sequence>MARMHTRRRGSSDSDKPAADEPPEWSDVDEDAIEARVVELAEQGHSPSEIGLKLRDEGVQGTPIPDVSLATGKKVTEILEENEAEPDLPEDLRNLLERAVRLRDHMDENPGDYQNKRALQNTQSKIRRLIDYYRGDEVDENFTYSYDNAVEALGLE</sequence>
<gene>
    <name evidence="1" type="primary">rps15</name>
    <name type="ordered locus">rrnAC1426</name>
</gene>
<protein>
    <recommendedName>
        <fullName evidence="1">Small ribosomal subunit protein uS15</fullName>
    </recommendedName>
    <alternativeName>
        <fullName evidence="4">30S ribosomal protein S15</fullName>
    </alternativeName>
    <alternativeName>
        <fullName>H-S11</fullName>
    </alternativeName>
    <alternativeName>
        <fullName>HmaS15</fullName>
    </alternativeName>
</protein>
<name>RS15_HALMA</name>
<reference key="1">
    <citation type="journal article" date="1988" name="J. Biol. Chem.">
        <title>Molecular cloning and nucleotide sequence of the gene for the ribosomal protein S11 from the archaebacterium Halobacterium marismortui.</title>
        <authorList>
            <person name="Arndt E."/>
            <person name="Kimura M."/>
        </authorList>
    </citation>
    <scope>NUCLEOTIDE SEQUENCE [GENOMIC DNA]</scope>
</reference>
<reference key="2">
    <citation type="journal article" date="2004" name="Genome Res.">
        <title>Genome sequence of Haloarcula marismortui: a halophilic archaeon from the Dead Sea.</title>
        <authorList>
            <person name="Baliga N.S."/>
            <person name="Bonneau R."/>
            <person name="Facciotti M.T."/>
            <person name="Pan M."/>
            <person name="Glusman G."/>
            <person name="Deutsch E.W."/>
            <person name="Shannon P."/>
            <person name="Chiu Y."/>
            <person name="Weng R.S."/>
            <person name="Gan R.R."/>
            <person name="Hung P."/>
            <person name="Date S.V."/>
            <person name="Marcotte E."/>
            <person name="Hood L."/>
            <person name="Ng W.V."/>
        </authorList>
    </citation>
    <scope>NUCLEOTIDE SEQUENCE [LARGE SCALE GENOMIC DNA]</scope>
    <source>
        <strain>ATCC 43049 / DSM 3752 / JCM 8966 / VKM B-1809</strain>
    </source>
</reference>
<reference key="3">
    <citation type="journal article" date="1986" name="FEBS Lett.">
        <title>The complete amino acid sequence of ribosomal protein H-S11 from the archaebacterium Halobacterium marismortui.</title>
        <authorList>
            <person name="Arndt E."/>
            <person name="Breithaupt G."/>
            <person name="Kimura M."/>
        </authorList>
    </citation>
    <scope>PROTEIN SEQUENCE OF 2-156</scope>
</reference>
<evidence type="ECO:0000255" key="1">
    <source>
        <dbReference type="HAMAP-Rule" id="MF_01343"/>
    </source>
</evidence>
<evidence type="ECO:0000256" key="2">
    <source>
        <dbReference type="SAM" id="MobiDB-lite"/>
    </source>
</evidence>
<evidence type="ECO:0000269" key="3">
    <source ref="3"/>
</evidence>
<evidence type="ECO:0000305" key="4"/>
<comment type="subunit">
    <text>Part of the 30S ribosomal subunit.</text>
</comment>
<comment type="similarity">
    <text evidence="1">Belongs to the universal ribosomal protein uS15 family.</text>
</comment>
<feature type="initiator methionine" description="Removed" evidence="3">
    <location>
        <position position="1"/>
    </location>
</feature>
<feature type="chain" id="PRO_0000115603" description="Small ribosomal subunit protein uS15">
    <location>
        <begin position="2"/>
        <end position="156"/>
    </location>
</feature>
<feature type="region of interest" description="Disordered" evidence="2">
    <location>
        <begin position="1"/>
        <end position="67"/>
    </location>
</feature>
<feature type="compositionally biased region" description="Basic and acidic residues" evidence="2">
    <location>
        <begin position="10"/>
        <end position="19"/>
    </location>
</feature>
<feature type="compositionally biased region" description="Acidic residues" evidence="2">
    <location>
        <begin position="21"/>
        <end position="32"/>
    </location>
</feature>
<feature type="sequence conflict" description="In Ref. 3; AA sequence." evidence="4" ref="3">
    <original>S</original>
    <variation>A</variation>
    <location>
        <position position="26"/>
    </location>
</feature>